<evidence type="ECO:0000250" key="1">
    <source>
        <dbReference type="UniProtKB" id="Q9QX29"/>
    </source>
</evidence>
<evidence type="ECO:0000250" key="2">
    <source>
        <dbReference type="UniProtKB" id="Q9UL62"/>
    </source>
</evidence>
<evidence type="ECO:0000255" key="3"/>
<evidence type="ECO:0000256" key="4">
    <source>
        <dbReference type="SAM" id="MobiDB-lite"/>
    </source>
</evidence>
<evidence type="ECO:0000269" key="5">
    <source>
    </source>
</evidence>
<evidence type="ECO:0000305" key="6"/>
<comment type="function">
    <text evidence="1 2 5">Forms a receptor-activated non-selective calcium permeant cation channel (PubMed:9687496). Mediates calcium-dependent phosphatidylserine externalization and apoptosis in neurons via its association with PLSCR1 (By similarity). Acts on distinct neuronal populations in the hypothalamus to regulate innate behaviors including feeding, anxiety (flight/fight/fear), socialization and maternal care (By similarity).</text>
</comment>
<comment type="catalytic activity">
    <reaction evidence="5">
        <text>Ca(2+)(in) = Ca(2+)(out)</text>
        <dbReference type="Rhea" id="RHEA:29671"/>
        <dbReference type="ChEBI" id="CHEBI:29108"/>
    </reaction>
</comment>
<comment type="activity regulation">
    <text evidence="2">Activated by G-protein coupled receptors via direct interaction with GTP-bound GNAI3, which increases the channel sensitivity to phosphatidylinositol bisphosphate (By similarity). May be activated by intracellular calcium store depletion. Calcium channel activity is enhanced by MYLK, that promotes its subcellular localization at the plasma membrane.</text>
</comment>
<comment type="subunit">
    <text evidence="1 2">Homotetramer (By similarity). Heterotetramer with TRPC1 and/or TRPC4 (By similarity). Each subunit in the homomeric ion channel (via ANK repeats) interacts with one copy of GTP-bound GNAI3; the interaction is direct and activates the ion channel (By similarity). Interacts with TRPC4AP (By similarity). Interacts with NHERF1 (By similarity). Interacts with MX1 and RNF24 (By similarity). Interacts (via C-terminus) with CABP1 (By similarity). Interacts with SESTD1 (via the spectrin 1 repeat) (By similarity). Interacts with PLSCR1 (By similarity). Interacts with PKD2L2 (By similarity).</text>
</comment>
<comment type="subcellular location">
    <subcellularLocation>
        <location evidence="2">Cell membrane</location>
        <topology evidence="2">Multi-pass membrane protein</topology>
    </subcellularLocation>
</comment>
<comment type="tissue specificity">
    <text evidence="5">Expressed in brain.</text>
</comment>
<comment type="similarity">
    <text evidence="6">Belongs to the transient receptor (TC 1.A.4) family. STrpC subfamily. TRPC5 sub-subfamily.</text>
</comment>
<accession>O62852</accession>
<organism>
    <name type="scientific">Oryctolagus cuniculus</name>
    <name type="common">Rabbit</name>
    <dbReference type="NCBI Taxonomy" id="9986"/>
    <lineage>
        <taxon>Eukaryota</taxon>
        <taxon>Metazoa</taxon>
        <taxon>Chordata</taxon>
        <taxon>Craniata</taxon>
        <taxon>Vertebrata</taxon>
        <taxon>Euteleostomi</taxon>
        <taxon>Mammalia</taxon>
        <taxon>Eutheria</taxon>
        <taxon>Euarchontoglires</taxon>
        <taxon>Glires</taxon>
        <taxon>Lagomorpha</taxon>
        <taxon>Leporidae</taxon>
        <taxon>Oryctolagus</taxon>
    </lineage>
</organism>
<protein>
    <recommendedName>
        <fullName>Short transient receptor potential channel 5</fullName>
        <shortName>Rtrp5</shortName>
        <shortName>TrpC5</shortName>
    </recommendedName>
    <alternativeName>
        <fullName>Capacitative calcium entry channel 2</fullName>
        <shortName>CCE2</shortName>
    </alternativeName>
</protein>
<sequence length="974" mass="111537">MAQLYYKKVNYSPYRDRIPLQIVRAETELSAEEKAFLNAVEKGDYATVKQALQEAEIYYNVNINCMDPLGRSALLIAIENENLEIMELLLNHSVYVGDALLYAIRKEVVGAVELLLSYRKPSGEKQVPTLMMDTQFSEFTPDITPIMLAAHTNNYEIIKLLVQKRVTIPRPHQIRCNCVECVSSSEVDSLRHSRSRLNIYKALASPSLIALSSEDPILTAFRLGWELKELSKVENEFKAEYEELSQQCKLFAKDLLDQARSSRELEIILNHRDDHSEELDPQKYHDLAKLKVAIKYHQKEFVAQPNCQQLLATLWYDGFPGWRRKHWVVKLLTCMTIGFLFPMLSIAYLISPRSNLGLFIKKPFIKFICHTASYLTFLFMLLLASQHIVRTDLHVQGPPPTVVEWMILPWVLGFIWGEIKEMWDGGFTEYIHDWWNLMDFAMNSLYLATISLKIVAYVKYNGSRPREEWEMWHPTLIAEALFAISNILSSLRLISLFTANSHLGPLQISLGRMLLDILKFLFIYCLVLLAFANGLNQLYFYYETRAIDEPNNCKGIRCEKQNNAFSTLFETLQSLFWSVFGLLNLYVTNVKARHEFTEFVGATMFGTYNVISLVVLLNMLIAMMNNSYQLIADHADIEWKFARTKLWMSYFDEGGTLPPPFNIIPSPKSFLYLGNWFNNTFCPKRDPDGRRRRHNLRSFTERHADSLIQNQHYQEVIRNLVKRYVAAMIRNSKTNEGLTEENFKELKQDISSFRYEVLDLLGNRKQPRRSLSTSSTELSQRDDTNDGSGGARAKSKSVSFNLGCKKKACHGPPLIRTMPRASGAQGKSKAESSSKRSFMGPSLKKLGLLFSKFNGHMSEPSSEPMYTISDGIVQQHYMWQDIRYSQMEKGKAEACSQSEINLSEVELGEVRGAAQSSECPLTCSSSLHCASSICSSNSKLLDSSEDVFETWGEACDLLMHKWGDGQEEQVTTRL</sequence>
<reference key="1">
    <citation type="journal article" date="1998" name="EMBO J.">
        <title>A novel capacitative calcium entry channel expressed in excitable cells.</title>
        <authorList>
            <person name="Philipp S."/>
            <person name="Hambrecht J."/>
            <person name="Braslavski L."/>
            <person name="Schroth G."/>
            <person name="Freichel M."/>
            <person name="Murakami M."/>
            <person name="Cavalie A."/>
            <person name="Flockerzi V."/>
        </authorList>
    </citation>
    <scope>NUCLEOTIDE SEQUENCE [MRNA]</scope>
    <scope>TISSUE SPECIFICITY</scope>
    <scope>FUNCTION</scope>
    <scope>TRANSPORTER ACTIVITY</scope>
    <source>
        <tissue>Brain</tissue>
    </source>
</reference>
<feature type="chain" id="PRO_0000215320" description="Short transient receptor potential channel 5">
    <location>
        <begin position="1"/>
        <end position="974"/>
    </location>
</feature>
<feature type="topological domain" description="Cytoplasmic" evidence="2">
    <location>
        <begin position="1"/>
        <end position="325"/>
    </location>
</feature>
<feature type="intramembrane region" description="Discontinuously helical; Name=Pre-S1" evidence="2">
    <location>
        <begin position="326"/>
        <end position="360"/>
    </location>
</feature>
<feature type="topological domain" description="Cytoplasmic" evidence="2">
    <location>
        <begin position="361"/>
        <end position="363"/>
    </location>
</feature>
<feature type="transmembrane region" description="Helical; Name=S1" evidence="2">
    <location>
        <begin position="364"/>
        <end position="384"/>
    </location>
</feature>
<feature type="topological domain" description="Extracellular" evidence="2">
    <location>
        <begin position="385"/>
        <end position="404"/>
    </location>
</feature>
<feature type="transmembrane region" description="Helical; Name=S2" evidence="2">
    <location>
        <begin position="405"/>
        <end position="419"/>
    </location>
</feature>
<feature type="topological domain" description="Cytoplasmic" evidence="2">
    <location>
        <begin position="420"/>
        <end position="433"/>
    </location>
</feature>
<feature type="transmembrane region" description="Helical; Name=S3" evidence="2">
    <location>
        <begin position="434"/>
        <end position="454"/>
    </location>
</feature>
<feature type="topological domain" description="Extracellular" evidence="2">
    <location>
        <begin position="455"/>
        <end position="476"/>
    </location>
</feature>
<feature type="transmembrane region" description="Helical; Name=S4" evidence="2">
    <location>
        <begin position="477"/>
        <end position="497"/>
    </location>
</feature>
<feature type="topological domain" description="Cytoplasmic" evidence="2">
    <location>
        <begin position="498"/>
        <end position="512"/>
    </location>
</feature>
<feature type="transmembrane region" description="Helical; Name=S5" evidence="2">
    <location>
        <begin position="513"/>
        <end position="535"/>
    </location>
</feature>
<feature type="topological domain" description="Extracellular" evidence="2">
    <location>
        <begin position="536"/>
        <end position="603"/>
    </location>
</feature>
<feature type="transmembrane region" description="Helical; Name=S6" evidence="2">
    <location>
        <begin position="604"/>
        <end position="624"/>
    </location>
</feature>
<feature type="topological domain" description="Cytoplasmic" evidence="2">
    <location>
        <begin position="625"/>
        <end position="974"/>
    </location>
</feature>
<feature type="repeat" description="ANK 1" evidence="2">
    <location>
        <begin position="30"/>
        <end position="60"/>
    </location>
</feature>
<feature type="repeat" description="ANK 2" evidence="2">
    <location>
        <begin position="69"/>
        <end position="97"/>
    </location>
</feature>
<feature type="repeat" description="ANK 3" evidence="2">
    <location>
        <begin position="98"/>
        <end position="124"/>
    </location>
</feature>
<feature type="repeat" description="ANK 4" evidence="2">
    <location>
        <begin position="141"/>
        <end position="170"/>
    </location>
</feature>
<feature type="region of interest" description="Disordered" evidence="4">
    <location>
        <begin position="766"/>
        <end position="795"/>
    </location>
</feature>
<feature type="region of interest" description="Disordered" evidence="4">
    <location>
        <begin position="811"/>
        <end position="838"/>
    </location>
</feature>
<feature type="region of interest" description="Essential for binding to NHERF1 PDZ domain" evidence="1">
    <location>
        <begin position="972"/>
        <end position="974"/>
    </location>
</feature>
<feature type="compositionally biased region" description="Low complexity" evidence="4">
    <location>
        <begin position="769"/>
        <end position="778"/>
    </location>
</feature>
<feature type="binding site" evidence="2">
    <location>
        <position position="172"/>
    </location>
    <ligand>
        <name>Zn(2+)</name>
        <dbReference type="ChEBI" id="CHEBI:29105"/>
    </ligand>
</feature>
<feature type="binding site" evidence="2">
    <location>
        <position position="176"/>
    </location>
    <ligand>
        <name>Zn(2+)</name>
        <dbReference type="ChEBI" id="CHEBI:29105"/>
    </ligand>
</feature>
<feature type="binding site" evidence="2">
    <location>
        <position position="178"/>
    </location>
    <ligand>
        <name>Zn(2+)</name>
        <dbReference type="ChEBI" id="CHEBI:29105"/>
    </ligand>
</feature>
<feature type="binding site" evidence="2">
    <location>
        <position position="181"/>
    </location>
    <ligand>
        <name>Zn(2+)</name>
        <dbReference type="ChEBI" id="CHEBI:29105"/>
    </ligand>
</feature>
<feature type="binding site" evidence="2">
    <location>
        <position position="418"/>
    </location>
    <ligand>
        <name>Ca(2+)</name>
        <dbReference type="ChEBI" id="CHEBI:29108"/>
    </ligand>
</feature>
<feature type="binding site" evidence="2">
    <location>
        <position position="421"/>
    </location>
    <ligand>
        <name>Ca(2+)</name>
        <dbReference type="ChEBI" id="CHEBI:29108"/>
    </ligand>
</feature>
<feature type="binding site" evidence="2">
    <location>
        <position position="436"/>
    </location>
    <ligand>
        <name>Ca(2+)</name>
        <dbReference type="ChEBI" id="CHEBI:29108"/>
    </ligand>
</feature>
<feature type="binding site" evidence="2">
    <location>
        <position position="439"/>
    </location>
    <ligand>
        <name>Ca(2+)</name>
        <dbReference type="ChEBI" id="CHEBI:29108"/>
    </ligand>
</feature>
<feature type="glycosylation site" description="N-linked (GlcNAc...) asparagine" evidence="3">
    <location>
        <position position="461"/>
    </location>
</feature>
<feature type="disulfide bond" evidence="2">
    <location>
        <begin position="553"/>
        <end position="558"/>
    </location>
</feature>
<name>TRPC5_RABIT</name>
<keyword id="KW-0040">ANK repeat</keyword>
<keyword id="KW-0106">Calcium</keyword>
<keyword id="KW-0107">Calcium channel</keyword>
<keyword id="KW-0109">Calcium transport</keyword>
<keyword id="KW-1003">Cell membrane</keyword>
<keyword id="KW-1015">Disulfide bond</keyword>
<keyword id="KW-0325">Glycoprotein</keyword>
<keyword id="KW-0407">Ion channel</keyword>
<keyword id="KW-0406">Ion transport</keyword>
<keyword id="KW-0472">Membrane</keyword>
<keyword id="KW-0479">Metal-binding</keyword>
<keyword id="KW-1185">Reference proteome</keyword>
<keyword id="KW-0677">Repeat</keyword>
<keyword id="KW-0812">Transmembrane</keyword>
<keyword id="KW-1133">Transmembrane helix</keyword>
<keyword id="KW-0813">Transport</keyword>
<keyword id="KW-0862">Zinc</keyword>
<gene>
    <name type="primary">TRPC5</name>
    <name type="synonym">TRP5</name>
</gene>
<dbReference type="EMBL" id="AJ006203">
    <property type="protein sequence ID" value="CAA06911.1"/>
    <property type="molecule type" value="mRNA"/>
</dbReference>
<dbReference type="RefSeq" id="NP_001076248.1">
    <property type="nucleotide sequence ID" value="NM_001082779.1"/>
</dbReference>
<dbReference type="SMR" id="O62852"/>
<dbReference type="FunCoup" id="O62852">
    <property type="interactions" value="29"/>
</dbReference>
<dbReference type="STRING" id="9986.ENSOCUP00000007983"/>
<dbReference type="GlyCosmos" id="O62852">
    <property type="glycosylation" value="1 site, No reported glycans"/>
</dbReference>
<dbReference type="PaxDb" id="9986-ENSOCUP00000007983"/>
<dbReference type="Ensembl" id="ENSOCUT00000009246.2">
    <property type="protein sequence ID" value="ENSOCUP00000007983.2"/>
    <property type="gene ID" value="ENSOCUG00000009245.2"/>
</dbReference>
<dbReference type="GeneID" id="100009574"/>
<dbReference type="KEGG" id="ocu:100009574"/>
<dbReference type="CTD" id="7224"/>
<dbReference type="eggNOG" id="KOG3609">
    <property type="taxonomic scope" value="Eukaryota"/>
</dbReference>
<dbReference type="GeneTree" id="ENSGT01060000248594"/>
<dbReference type="HOGENOM" id="CLU_005716_4_1_1"/>
<dbReference type="InParanoid" id="O62852"/>
<dbReference type="OMA" id="LCKWIHK"/>
<dbReference type="OrthoDB" id="2373987at2759"/>
<dbReference type="TreeFam" id="TF313147"/>
<dbReference type="Proteomes" id="UP000001811">
    <property type="component" value="Chromosome X"/>
</dbReference>
<dbReference type="Bgee" id="ENSOCUG00000009245">
    <property type="expression patterns" value="Expressed in kidney and 4 other cell types or tissues"/>
</dbReference>
<dbReference type="GO" id="GO:0034704">
    <property type="term" value="C:calcium channel complex"/>
    <property type="evidence" value="ECO:0007669"/>
    <property type="project" value="Ensembl"/>
</dbReference>
<dbReference type="GO" id="GO:0005886">
    <property type="term" value="C:plasma membrane"/>
    <property type="evidence" value="ECO:0000250"/>
    <property type="project" value="UniProtKB"/>
</dbReference>
<dbReference type="GO" id="GO:0098793">
    <property type="term" value="C:presynapse"/>
    <property type="evidence" value="ECO:0007669"/>
    <property type="project" value="Ensembl"/>
</dbReference>
<dbReference type="GO" id="GO:0005262">
    <property type="term" value="F:calcium channel activity"/>
    <property type="evidence" value="ECO:0000314"/>
    <property type="project" value="UniProtKB"/>
</dbReference>
<dbReference type="GO" id="GO:0070679">
    <property type="term" value="F:inositol 1,4,5 trisphosphate binding"/>
    <property type="evidence" value="ECO:0007669"/>
    <property type="project" value="Ensembl"/>
</dbReference>
<dbReference type="GO" id="GO:0015279">
    <property type="term" value="F:store-operated calcium channel activity"/>
    <property type="evidence" value="ECO:0007669"/>
    <property type="project" value="TreeGrafter"/>
</dbReference>
<dbReference type="GO" id="GO:0051402">
    <property type="term" value="P:neuron apoptotic process"/>
    <property type="evidence" value="ECO:0000250"/>
    <property type="project" value="UniProtKB"/>
</dbReference>
<dbReference type="GO" id="GO:0070782">
    <property type="term" value="P:phosphatidylserine exposure on apoptotic cell surface"/>
    <property type="evidence" value="ECO:0000250"/>
    <property type="project" value="UniProtKB"/>
</dbReference>
<dbReference type="GO" id="GO:0051480">
    <property type="term" value="P:regulation of cytosolic calcium ion concentration"/>
    <property type="evidence" value="ECO:0007669"/>
    <property type="project" value="TreeGrafter"/>
</dbReference>
<dbReference type="FunFam" id="1.25.40.20:FF:000023">
    <property type="entry name" value="short transient receptor potential channel 4 isoform X1"/>
    <property type="match status" value="1"/>
</dbReference>
<dbReference type="FunFam" id="1.10.287.70:FF:000266">
    <property type="entry name" value="Transient receptor potential cation channel subfamily c member 1"/>
    <property type="match status" value="1"/>
</dbReference>
<dbReference type="Gene3D" id="1.25.40.20">
    <property type="entry name" value="Ankyrin repeat-containing domain"/>
    <property type="match status" value="1"/>
</dbReference>
<dbReference type="InterPro" id="IPR002110">
    <property type="entry name" value="Ankyrin_rpt"/>
</dbReference>
<dbReference type="InterPro" id="IPR036770">
    <property type="entry name" value="Ankyrin_rpt-contain_sf"/>
</dbReference>
<dbReference type="InterPro" id="IPR005821">
    <property type="entry name" value="Ion_trans_dom"/>
</dbReference>
<dbReference type="InterPro" id="IPR013555">
    <property type="entry name" value="TRP_dom"/>
</dbReference>
<dbReference type="InterPro" id="IPR005461">
    <property type="entry name" value="TRPC5_channel"/>
</dbReference>
<dbReference type="InterPro" id="IPR002153">
    <property type="entry name" value="TRPC_channel"/>
</dbReference>
<dbReference type="NCBIfam" id="TIGR00870">
    <property type="entry name" value="trp"/>
    <property type="match status" value="1"/>
</dbReference>
<dbReference type="PANTHER" id="PTHR10117:SF76">
    <property type="entry name" value="SHORT TRANSIENT RECEPTOR POTENTIAL CHANNEL 5"/>
    <property type="match status" value="1"/>
</dbReference>
<dbReference type="PANTHER" id="PTHR10117">
    <property type="entry name" value="TRANSIENT RECEPTOR POTENTIAL CHANNEL"/>
    <property type="match status" value="1"/>
</dbReference>
<dbReference type="Pfam" id="PF00023">
    <property type="entry name" value="Ank"/>
    <property type="match status" value="1"/>
</dbReference>
<dbReference type="Pfam" id="PF12796">
    <property type="entry name" value="Ank_2"/>
    <property type="match status" value="1"/>
</dbReference>
<dbReference type="Pfam" id="PF00520">
    <property type="entry name" value="Ion_trans"/>
    <property type="match status" value="1"/>
</dbReference>
<dbReference type="Pfam" id="PF08344">
    <property type="entry name" value="TRP_2"/>
    <property type="match status" value="1"/>
</dbReference>
<dbReference type="PRINTS" id="PR01097">
    <property type="entry name" value="TRNSRECEPTRP"/>
</dbReference>
<dbReference type="PRINTS" id="PR01646">
    <property type="entry name" value="TRPCHANNEL5"/>
</dbReference>
<dbReference type="SMART" id="SM00248">
    <property type="entry name" value="ANK"/>
    <property type="match status" value="2"/>
</dbReference>
<dbReference type="SMART" id="SM01420">
    <property type="entry name" value="TRP_2"/>
    <property type="match status" value="1"/>
</dbReference>
<dbReference type="SUPFAM" id="SSF48403">
    <property type="entry name" value="Ankyrin repeat"/>
    <property type="match status" value="1"/>
</dbReference>
<proteinExistence type="evidence at transcript level"/>